<reference key="1">
    <citation type="journal article" date="2011" name="Proc. Natl. Acad. Sci. U.S.A.">
        <title>Genomic anatomy of Escherichia coli O157:H7 outbreaks.</title>
        <authorList>
            <person name="Eppinger M."/>
            <person name="Mammel M.K."/>
            <person name="Leclerc J.E."/>
            <person name="Ravel J."/>
            <person name="Cebula T.A."/>
        </authorList>
    </citation>
    <scope>NUCLEOTIDE SEQUENCE [LARGE SCALE GENOMIC DNA]</scope>
    <source>
        <strain>EC4115 / EHEC</strain>
    </source>
</reference>
<keyword id="KW-0488">Methylation</keyword>
<keyword id="KW-0687">Ribonucleoprotein</keyword>
<keyword id="KW-0689">Ribosomal protein</keyword>
<keyword id="KW-0694">RNA-binding</keyword>
<keyword id="KW-0699">rRNA-binding</keyword>
<sequence>MIGLVGKKVGMTRIFTEDGVSIPVTVIEVEANRVTQVKDLANDGYRAIQVTTGAKKANRVTKPEAGHFAKAGVEAGRGLWEFRLAEGEEFTVGQSISVELFADVKKVDVTGTSKGKGFAGTVKRWNFRTQDATHGNSLSHRVPGSIGQNQTPGKVFKGKKMAGQMGNERVTVQSLDVVRVDAERNLLLVKGAVPGATGSDLIVKPAVKA</sequence>
<dbReference type="EMBL" id="CP001164">
    <property type="protein sequence ID" value="ACI37815.1"/>
    <property type="molecule type" value="Genomic_DNA"/>
</dbReference>
<dbReference type="RefSeq" id="WP_000579833.1">
    <property type="nucleotide sequence ID" value="NC_011353.1"/>
</dbReference>
<dbReference type="SMR" id="B5YTP1"/>
<dbReference type="GeneID" id="86948184"/>
<dbReference type="KEGG" id="ecf:ECH74115_4643"/>
<dbReference type="HOGENOM" id="CLU_044142_4_1_6"/>
<dbReference type="GO" id="GO:0022625">
    <property type="term" value="C:cytosolic large ribosomal subunit"/>
    <property type="evidence" value="ECO:0007669"/>
    <property type="project" value="TreeGrafter"/>
</dbReference>
<dbReference type="GO" id="GO:0019843">
    <property type="term" value="F:rRNA binding"/>
    <property type="evidence" value="ECO:0007669"/>
    <property type="project" value="UniProtKB-UniRule"/>
</dbReference>
<dbReference type="GO" id="GO:0003735">
    <property type="term" value="F:structural constituent of ribosome"/>
    <property type="evidence" value="ECO:0007669"/>
    <property type="project" value="InterPro"/>
</dbReference>
<dbReference type="GO" id="GO:0006412">
    <property type="term" value="P:translation"/>
    <property type="evidence" value="ECO:0007669"/>
    <property type="project" value="UniProtKB-UniRule"/>
</dbReference>
<dbReference type="FunFam" id="2.40.30.10:FF:000004">
    <property type="entry name" value="50S ribosomal protein L3"/>
    <property type="match status" value="1"/>
</dbReference>
<dbReference type="FunFam" id="3.30.160.810:FF:000001">
    <property type="entry name" value="50S ribosomal protein L3"/>
    <property type="match status" value="1"/>
</dbReference>
<dbReference type="Gene3D" id="3.30.160.810">
    <property type="match status" value="1"/>
</dbReference>
<dbReference type="Gene3D" id="2.40.30.10">
    <property type="entry name" value="Translation factors"/>
    <property type="match status" value="1"/>
</dbReference>
<dbReference type="HAMAP" id="MF_01325_B">
    <property type="entry name" value="Ribosomal_uL3_B"/>
    <property type="match status" value="1"/>
</dbReference>
<dbReference type="InterPro" id="IPR000597">
    <property type="entry name" value="Ribosomal_uL3"/>
</dbReference>
<dbReference type="InterPro" id="IPR019927">
    <property type="entry name" value="Ribosomal_uL3_bac/org-type"/>
</dbReference>
<dbReference type="InterPro" id="IPR019926">
    <property type="entry name" value="Ribosomal_uL3_CS"/>
</dbReference>
<dbReference type="InterPro" id="IPR009000">
    <property type="entry name" value="Transl_B-barrel_sf"/>
</dbReference>
<dbReference type="NCBIfam" id="TIGR03625">
    <property type="entry name" value="L3_bact"/>
    <property type="match status" value="1"/>
</dbReference>
<dbReference type="PANTHER" id="PTHR11229">
    <property type="entry name" value="50S RIBOSOMAL PROTEIN L3"/>
    <property type="match status" value="1"/>
</dbReference>
<dbReference type="PANTHER" id="PTHR11229:SF16">
    <property type="entry name" value="LARGE RIBOSOMAL SUBUNIT PROTEIN UL3C"/>
    <property type="match status" value="1"/>
</dbReference>
<dbReference type="Pfam" id="PF00297">
    <property type="entry name" value="Ribosomal_L3"/>
    <property type="match status" value="1"/>
</dbReference>
<dbReference type="SUPFAM" id="SSF50447">
    <property type="entry name" value="Translation proteins"/>
    <property type="match status" value="1"/>
</dbReference>
<dbReference type="PROSITE" id="PS00474">
    <property type="entry name" value="RIBOSOMAL_L3"/>
    <property type="match status" value="1"/>
</dbReference>
<comment type="function">
    <text evidence="1">One of the primary rRNA binding proteins, it binds directly near the 3'-end of the 23S rRNA, where it nucleates assembly of the 50S subunit.</text>
</comment>
<comment type="subunit">
    <text evidence="1">Part of the 50S ribosomal subunit. Forms a cluster with proteins L14 and L19.</text>
</comment>
<comment type="PTM">
    <text evidence="1">Methylated by PrmB.</text>
</comment>
<comment type="similarity">
    <text evidence="1">Belongs to the universal ribosomal protein uL3 family.</text>
</comment>
<protein>
    <recommendedName>
        <fullName evidence="1">Large ribosomal subunit protein uL3</fullName>
    </recommendedName>
    <alternativeName>
        <fullName evidence="2">50S ribosomal protein L3</fullName>
    </alternativeName>
</protein>
<feature type="chain" id="PRO_1000141860" description="Large ribosomal subunit protein uL3">
    <location>
        <begin position="1"/>
        <end position="209"/>
    </location>
</feature>
<feature type="modified residue" description="N5-methylglutamine" evidence="1">
    <location>
        <position position="150"/>
    </location>
</feature>
<evidence type="ECO:0000255" key="1">
    <source>
        <dbReference type="HAMAP-Rule" id="MF_01325"/>
    </source>
</evidence>
<evidence type="ECO:0000305" key="2"/>
<accession>B5YTP1</accession>
<proteinExistence type="inferred from homology"/>
<name>RL3_ECO5E</name>
<organism>
    <name type="scientific">Escherichia coli O157:H7 (strain EC4115 / EHEC)</name>
    <dbReference type="NCBI Taxonomy" id="444450"/>
    <lineage>
        <taxon>Bacteria</taxon>
        <taxon>Pseudomonadati</taxon>
        <taxon>Pseudomonadota</taxon>
        <taxon>Gammaproteobacteria</taxon>
        <taxon>Enterobacterales</taxon>
        <taxon>Enterobacteriaceae</taxon>
        <taxon>Escherichia</taxon>
    </lineage>
</organism>
<gene>
    <name evidence="1" type="primary">rplC</name>
    <name type="ordered locus">ECH74115_4643</name>
</gene>